<name>GLAH_KLEP3</name>
<proteinExistence type="inferred from homology"/>
<gene>
    <name evidence="1" type="primary">glaH</name>
    <name type="ordered locus">KPK_4474</name>
</gene>
<evidence type="ECO:0000255" key="1">
    <source>
        <dbReference type="HAMAP-Rule" id="MF_01083"/>
    </source>
</evidence>
<organism>
    <name type="scientific">Klebsiella pneumoniae (strain 342)</name>
    <dbReference type="NCBI Taxonomy" id="507522"/>
    <lineage>
        <taxon>Bacteria</taxon>
        <taxon>Pseudomonadati</taxon>
        <taxon>Pseudomonadota</taxon>
        <taxon>Gammaproteobacteria</taxon>
        <taxon>Enterobacterales</taxon>
        <taxon>Enterobacteriaceae</taxon>
        <taxon>Klebsiella/Raoultella group</taxon>
        <taxon>Klebsiella</taxon>
        <taxon>Klebsiella pneumoniae complex</taxon>
    </lineage>
</organism>
<protein>
    <recommendedName>
        <fullName evidence="1">Glutarate 2-hydroxylase</fullName>
        <shortName evidence="1">G-2-H</shortName>
        <ecNumber evidence="1">1.14.11.64</ecNumber>
    </recommendedName>
</protein>
<keyword id="KW-0223">Dioxygenase</keyword>
<keyword id="KW-0408">Iron</keyword>
<keyword id="KW-0479">Metal-binding</keyword>
<keyword id="KW-0560">Oxidoreductase</keyword>
<accession>B5Y1D2</accession>
<comment type="function">
    <text evidence="1">Acts as an alpha-ketoglutarate-dependent dioxygenase catalyzing hydroxylation of glutarate (GA) to L-2-hydroxyglutarate (L2HG). Functions in a L-lysine degradation pathway that proceeds via cadaverine, glutarate and L-2-hydroxyglutarate.</text>
</comment>
<comment type="catalytic activity">
    <reaction evidence="1">
        <text>glutarate + 2-oxoglutarate + O2 = (S)-2-hydroxyglutarate + succinate + CO2</text>
        <dbReference type="Rhea" id="RHEA:13821"/>
        <dbReference type="ChEBI" id="CHEBI:15379"/>
        <dbReference type="ChEBI" id="CHEBI:16526"/>
        <dbReference type="ChEBI" id="CHEBI:16782"/>
        <dbReference type="ChEBI" id="CHEBI:16810"/>
        <dbReference type="ChEBI" id="CHEBI:30031"/>
        <dbReference type="ChEBI" id="CHEBI:30921"/>
        <dbReference type="EC" id="1.14.11.64"/>
    </reaction>
    <physiologicalReaction direction="left-to-right" evidence="1">
        <dbReference type="Rhea" id="RHEA:13822"/>
    </physiologicalReaction>
</comment>
<comment type="cofactor">
    <cofactor evidence="1">
        <name>Fe(2+)</name>
        <dbReference type="ChEBI" id="CHEBI:29033"/>
    </cofactor>
    <text evidence="1">Binds 1 Fe(2+) ion per subunit.</text>
</comment>
<comment type="pathway">
    <text evidence="1">Amino-acid degradation.</text>
</comment>
<comment type="subunit">
    <text evidence="1">Homotetramer.</text>
</comment>
<comment type="similarity">
    <text evidence="1">Belongs to the glutarate hydroxylase family.</text>
</comment>
<reference key="1">
    <citation type="journal article" date="2008" name="PLoS Genet.">
        <title>Complete genome sequence of the N2-fixing broad host range endophyte Klebsiella pneumoniae 342 and virulence predictions verified in mice.</title>
        <authorList>
            <person name="Fouts D.E."/>
            <person name="Tyler H.L."/>
            <person name="DeBoy R.T."/>
            <person name="Daugherty S."/>
            <person name="Ren Q."/>
            <person name="Badger J.H."/>
            <person name="Durkin A.S."/>
            <person name="Huot H."/>
            <person name="Shrivastava S."/>
            <person name="Kothari S."/>
            <person name="Dodson R.J."/>
            <person name="Mohamoud Y."/>
            <person name="Khouri H."/>
            <person name="Roesch L.F.W."/>
            <person name="Krogfelt K.A."/>
            <person name="Struve C."/>
            <person name="Triplett E.W."/>
            <person name="Methe B.A."/>
        </authorList>
    </citation>
    <scope>NUCLEOTIDE SEQUENCE [LARGE SCALE GENOMIC DNA]</scope>
    <source>
        <strain>342</strain>
    </source>
</reference>
<sequence length="325" mass="37250">MNALTAVKPTPAPLAQPYPGFSIAPSAQSPRLLELTFSAETTTQFLQQVAQWPVQALEYKSFLRFQVGKILDDLCGNQLQPLLIKTLLDRAEGALLINGEGIDNVSQAEEMVKLATAVAHLIGRSNFDAMSGQYYARFVVKNVDNSDSYLRQPHRVMELHNDGTYVEEQTDYVLMMKIDEQNMQGGNSLLLHLDDWEHLDEFFRDPLARRPMRWAAPPSKNVSKDVFHPVFDVDSLGRPVMRYIDQFVQPKDFEEGTWLSRLSDALETSKNILSIPVPVGKFLLINNLFWLHGRDRFTPHPDLRRELMRQRGYFAYSTNHYQTHQ</sequence>
<dbReference type="EC" id="1.14.11.64" evidence="1"/>
<dbReference type="EMBL" id="CP000964">
    <property type="protein sequence ID" value="ACI07388.1"/>
    <property type="molecule type" value="Genomic_DNA"/>
</dbReference>
<dbReference type="SMR" id="B5Y1D2"/>
<dbReference type="KEGG" id="kpe:KPK_4474"/>
<dbReference type="HOGENOM" id="CLU_075277_0_0_6"/>
<dbReference type="Proteomes" id="UP000001734">
    <property type="component" value="Chromosome"/>
</dbReference>
<dbReference type="GO" id="GO:0008198">
    <property type="term" value="F:ferrous iron binding"/>
    <property type="evidence" value="ECO:0007669"/>
    <property type="project" value="UniProtKB-UniRule"/>
</dbReference>
<dbReference type="GO" id="GO:0106343">
    <property type="term" value="F:glutarate dioxygenase activity"/>
    <property type="evidence" value="ECO:0007669"/>
    <property type="project" value="UniProtKB-EC"/>
</dbReference>
<dbReference type="GO" id="GO:0050498">
    <property type="term" value="F:oxidoreductase activity, acting on paired donors, with incorporation or reduction of molecular oxygen, with 2-oxoglutarate as one donor, and the other dehydrogenated"/>
    <property type="evidence" value="ECO:0007669"/>
    <property type="project" value="UniProtKB-UniRule"/>
</dbReference>
<dbReference type="GO" id="GO:0019477">
    <property type="term" value="P:L-lysine catabolic process"/>
    <property type="evidence" value="ECO:0007669"/>
    <property type="project" value="UniProtKB-UniRule"/>
</dbReference>
<dbReference type="CDD" id="cd00250">
    <property type="entry name" value="CAS_like"/>
    <property type="match status" value="1"/>
</dbReference>
<dbReference type="Gene3D" id="3.60.130.10">
    <property type="entry name" value="Clavaminate synthase-like"/>
    <property type="match status" value="1"/>
</dbReference>
<dbReference type="HAMAP" id="MF_01083">
    <property type="entry name" value="glutarate_hydroxylase"/>
    <property type="match status" value="1"/>
</dbReference>
<dbReference type="InterPro" id="IPR050411">
    <property type="entry name" value="AlphaKG_dependent_hydroxylases"/>
</dbReference>
<dbReference type="InterPro" id="IPR015038">
    <property type="entry name" value="GlaH"/>
</dbReference>
<dbReference type="InterPro" id="IPR042098">
    <property type="entry name" value="TauD-like_sf"/>
</dbReference>
<dbReference type="NCBIfam" id="NF002814">
    <property type="entry name" value="PRK02963.1"/>
    <property type="match status" value="1"/>
</dbReference>
<dbReference type="PANTHER" id="PTHR10696">
    <property type="entry name" value="GAMMA-BUTYROBETAINE HYDROXYLASE-RELATED"/>
    <property type="match status" value="1"/>
</dbReference>
<dbReference type="PANTHER" id="PTHR10696:SF56">
    <property type="entry name" value="TAUD_TFDA-LIKE DOMAIN-CONTAINING PROTEIN"/>
    <property type="match status" value="1"/>
</dbReference>
<dbReference type="Pfam" id="PF08943">
    <property type="entry name" value="CsiD"/>
    <property type="match status" value="1"/>
</dbReference>
<dbReference type="SUPFAM" id="SSF51197">
    <property type="entry name" value="Clavaminate synthase-like"/>
    <property type="match status" value="1"/>
</dbReference>
<feature type="chain" id="PRO_1000136871" description="Glutarate 2-hydroxylase">
    <location>
        <begin position="1"/>
        <end position="325"/>
    </location>
</feature>
<feature type="binding site" evidence="1">
    <location>
        <position position="160"/>
    </location>
    <ligand>
        <name>Fe cation</name>
        <dbReference type="ChEBI" id="CHEBI:24875"/>
    </ligand>
</feature>
<feature type="binding site" evidence="1">
    <location>
        <position position="162"/>
    </location>
    <ligand>
        <name>Fe cation</name>
        <dbReference type="ChEBI" id="CHEBI:24875"/>
    </ligand>
</feature>
<feature type="binding site" evidence="1">
    <location>
        <position position="292"/>
    </location>
    <ligand>
        <name>Fe cation</name>
        <dbReference type="ChEBI" id="CHEBI:24875"/>
    </ligand>
</feature>